<keyword id="KW-0030">Aminoacyl-tRNA synthetase</keyword>
<keyword id="KW-0067">ATP-binding</keyword>
<keyword id="KW-0963">Cytoplasm</keyword>
<keyword id="KW-0436">Ligase</keyword>
<keyword id="KW-0479">Metal-binding</keyword>
<keyword id="KW-0547">Nucleotide-binding</keyword>
<keyword id="KW-0648">Protein biosynthesis</keyword>
<keyword id="KW-1185">Reference proteome</keyword>
<keyword id="KW-0694">RNA-binding</keyword>
<keyword id="KW-0820">tRNA-binding</keyword>
<keyword id="KW-0862">Zinc</keyword>
<protein>
    <recommendedName>
        <fullName evidence="1">Threonine--tRNA ligase</fullName>
        <ecNumber evidence="1">6.1.1.3</ecNumber>
    </recommendedName>
    <alternativeName>
        <fullName evidence="1">Threonyl-tRNA synthetase</fullName>
        <shortName evidence="1">ThrRS</shortName>
    </alternativeName>
</protein>
<feature type="chain" id="PRO_0000101044" description="Threonine--tRNA ligase">
    <location>
        <begin position="1"/>
        <end position="642"/>
    </location>
</feature>
<feature type="domain" description="TGS" evidence="2">
    <location>
        <begin position="1"/>
        <end position="61"/>
    </location>
</feature>
<feature type="region of interest" description="Catalytic" evidence="1">
    <location>
        <begin position="243"/>
        <end position="534"/>
    </location>
</feature>
<feature type="binding site" evidence="1">
    <location>
        <position position="334"/>
    </location>
    <ligand>
        <name>Zn(2+)</name>
        <dbReference type="ChEBI" id="CHEBI:29105"/>
    </ligand>
</feature>
<feature type="binding site" evidence="1">
    <location>
        <position position="385"/>
    </location>
    <ligand>
        <name>Zn(2+)</name>
        <dbReference type="ChEBI" id="CHEBI:29105"/>
    </ligand>
</feature>
<feature type="binding site" evidence="1">
    <location>
        <position position="511"/>
    </location>
    <ligand>
        <name>Zn(2+)</name>
        <dbReference type="ChEBI" id="CHEBI:29105"/>
    </ligand>
</feature>
<reference key="1">
    <citation type="journal article" date="2002" name="Nat. Biotechnol.">
        <title>Genome sequence of the dissimilatory metal ion-reducing bacterium Shewanella oneidensis.</title>
        <authorList>
            <person name="Heidelberg J.F."/>
            <person name="Paulsen I.T."/>
            <person name="Nelson K.E."/>
            <person name="Gaidos E.J."/>
            <person name="Nelson W.C."/>
            <person name="Read T.D."/>
            <person name="Eisen J.A."/>
            <person name="Seshadri R."/>
            <person name="Ward N.L."/>
            <person name="Methe B.A."/>
            <person name="Clayton R.A."/>
            <person name="Meyer T."/>
            <person name="Tsapin A."/>
            <person name="Scott J."/>
            <person name="Beanan M.J."/>
            <person name="Brinkac L.M."/>
            <person name="Daugherty S.C."/>
            <person name="DeBoy R.T."/>
            <person name="Dodson R.J."/>
            <person name="Durkin A.S."/>
            <person name="Haft D.H."/>
            <person name="Kolonay J.F."/>
            <person name="Madupu R."/>
            <person name="Peterson J.D."/>
            <person name="Umayam L.A."/>
            <person name="White O."/>
            <person name="Wolf A.M."/>
            <person name="Vamathevan J.J."/>
            <person name="Weidman J.F."/>
            <person name="Impraim M."/>
            <person name="Lee K."/>
            <person name="Berry K.J."/>
            <person name="Lee C."/>
            <person name="Mueller J."/>
            <person name="Khouri H.M."/>
            <person name="Gill J."/>
            <person name="Utterback T.R."/>
            <person name="McDonald L.A."/>
            <person name="Feldblyum T.V."/>
            <person name="Smith H.O."/>
            <person name="Venter J.C."/>
            <person name="Nealson K.H."/>
            <person name="Fraser C.M."/>
        </authorList>
    </citation>
    <scope>NUCLEOTIDE SEQUENCE [LARGE SCALE GENOMIC DNA]</scope>
    <source>
        <strain>ATCC 700550 / JCM 31522 / CIP 106686 / LMG 19005 / NCIMB 14063 / MR-1</strain>
    </source>
</reference>
<accession>Q8EER9</accession>
<proteinExistence type="inferred from homology"/>
<organism>
    <name type="scientific">Shewanella oneidensis (strain ATCC 700550 / JCM 31522 / CIP 106686 / LMG 19005 / NCIMB 14063 / MR-1)</name>
    <dbReference type="NCBI Taxonomy" id="211586"/>
    <lineage>
        <taxon>Bacteria</taxon>
        <taxon>Pseudomonadati</taxon>
        <taxon>Pseudomonadota</taxon>
        <taxon>Gammaproteobacteria</taxon>
        <taxon>Alteromonadales</taxon>
        <taxon>Shewanellaceae</taxon>
        <taxon>Shewanella</taxon>
    </lineage>
</organism>
<sequence>MPVITLPDGSKREFAHPVSTLDVAADIGPGLAKACIAGRVNGELKDACDLIETDAELSIITAKDEEGIEILRHSCAHLLGHAIKQLWPQTKMAIGPVIDNGFYYDIDLEHKLTQDDIEALEKRMLELAKTNYDVVKRVVSWQEARDTFAARGEEYKIAILDENISKDATPALYHHEEYTDMCRGPHVPNMRFCQHFKLMSIAGAYWRGNSENKMLQRIYGTAWADKKALSTYLARLEEAAKRDHRKIGKQLDLYHMQEEAPGMVFWHNDGWSIFLELERFIRRKLNQYTYQEVKGPLMMDRVLWERSGHWDKYSEAMFTTSSENREYAIKPMNCPGHVQIFNQGLKSYRDLPLRMAEFGCCHRNEPSGSLHGLMRVRGFTQDDAHIFCTEDQVQAEVSSCIQMVYDTYSTFGFENIVVKLSTRPEKRIGDDAMWDRAEEALKQALRANNIEFTILPGEGAFYGPKIEFTLHDCLDRAWQCGTVQLDYALPSRLGATYVAEDNSRQTPVMIHRAILGSLERFLGILIEEYAGRFPTWLAPMQVVVMNITDKQADYVEEVVKFFKEQGIRASFDLRNEKIGFKIREHTLRRVPYLLVVGDQEMENKEVAVRTRDGVDLGKMRIEDFAAKIHQQISLRSLKLLEE</sequence>
<dbReference type="EC" id="6.1.1.3" evidence="1"/>
<dbReference type="EMBL" id="AE014299">
    <property type="protein sequence ID" value="AAN55339.1"/>
    <property type="molecule type" value="Genomic_DNA"/>
</dbReference>
<dbReference type="RefSeq" id="NP_717895.1">
    <property type="nucleotide sequence ID" value="NC_004347.2"/>
</dbReference>
<dbReference type="RefSeq" id="WP_011072301.1">
    <property type="nucleotide sequence ID" value="NZ_CP053946.1"/>
</dbReference>
<dbReference type="SMR" id="Q8EER9"/>
<dbReference type="STRING" id="211586.SO_2299"/>
<dbReference type="PaxDb" id="211586-SO_2299"/>
<dbReference type="KEGG" id="son:SO_2299"/>
<dbReference type="PATRIC" id="fig|211586.12.peg.2214"/>
<dbReference type="eggNOG" id="COG0441">
    <property type="taxonomic scope" value="Bacteria"/>
</dbReference>
<dbReference type="HOGENOM" id="CLU_008554_0_1_6"/>
<dbReference type="OrthoDB" id="9802304at2"/>
<dbReference type="PhylomeDB" id="Q8EER9"/>
<dbReference type="BioCyc" id="SONE211586:G1GMP-2101-MONOMER"/>
<dbReference type="Proteomes" id="UP000008186">
    <property type="component" value="Chromosome"/>
</dbReference>
<dbReference type="GO" id="GO:0005829">
    <property type="term" value="C:cytosol"/>
    <property type="evidence" value="ECO:0000318"/>
    <property type="project" value="GO_Central"/>
</dbReference>
<dbReference type="GO" id="GO:0005524">
    <property type="term" value="F:ATP binding"/>
    <property type="evidence" value="ECO:0007669"/>
    <property type="project" value="UniProtKB-UniRule"/>
</dbReference>
<dbReference type="GO" id="GO:0046872">
    <property type="term" value="F:metal ion binding"/>
    <property type="evidence" value="ECO:0007669"/>
    <property type="project" value="UniProtKB-KW"/>
</dbReference>
<dbReference type="GO" id="GO:0004829">
    <property type="term" value="F:threonine-tRNA ligase activity"/>
    <property type="evidence" value="ECO:0000318"/>
    <property type="project" value="GO_Central"/>
</dbReference>
<dbReference type="GO" id="GO:0000049">
    <property type="term" value="F:tRNA binding"/>
    <property type="evidence" value="ECO:0007669"/>
    <property type="project" value="UniProtKB-KW"/>
</dbReference>
<dbReference type="GO" id="GO:0006435">
    <property type="term" value="P:threonyl-tRNA aminoacylation"/>
    <property type="evidence" value="ECO:0000318"/>
    <property type="project" value="GO_Central"/>
</dbReference>
<dbReference type="CDD" id="cd01667">
    <property type="entry name" value="TGS_ThrRS"/>
    <property type="match status" value="1"/>
</dbReference>
<dbReference type="CDD" id="cd00860">
    <property type="entry name" value="ThrRS_anticodon"/>
    <property type="match status" value="1"/>
</dbReference>
<dbReference type="CDD" id="cd00771">
    <property type="entry name" value="ThrRS_core"/>
    <property type="match status" value="1"/>
</dbReference>
<dbReference type="FunFam" id="3.10.20.30:FF:000005">
    <property type="entry name" value="Threonine--tRNA ligase"/>
    <property type="match status" value="1"/>
</dbReference>
<dbReference type="FunFam" id="3.30.54.20:FF:000002">
    <property type="entry name" value="Threonine--tRNA ligase"/>
    <property type="match status" value="1"/>
</dbReference>
<dbReference type="FunFam" id="3.30.930.10:FF:000002">
    <property type="entry name" value="Threonine--tRNA ligase"/>
    <property type="match status" value="1"/>
</dbReference>
<dbReference type="FunFam" id="3.40.50.800:FF:000001">
    <property type="entry name" value="Threonine--tRNA ligase"/>
    <property type="match status" value="1"/>
</dbReference>
<dbReference type="FunFam" id="3.30.980.10:FF:000005">
    <property type="entry name" value="Threonyl-tRNA synthetase, mitochondrial"/>
    <property type="match status" value="1"/>
</dbReference>
<dbReference type="Gene3D" id="3.10.20.30">
    <property type="match status" value="1"/>
</dbReference>
<dbReference type="Gene3D" id="3.30.54.20">
    <property type="match status" value="1"/>
</dbReference>
<dbReference type="Gene3D" id="3.40.50.800">
    <property type="entry name" value="Anticodon-binding domain"/>
    <property type="match status" value="1"/>
</dbReference>
<dbReference type="Gene3D" id="3.30.930.10">
    <property type="entry name" value="Bira Bifunctional Protein, Domain 2"/>
    <property type="match status" value="1"/>
</dbReference>
<dbReference type="Gene3D" id="3.30.980.10">
    <property type="entry name" value="Threonyl-trna Synthetase, Chain A, domain 2"/>
    <property type="match status" value="1"/>
</dbReference>
<dbReference type="HAMAP" id="MF_00184">
    <property type="entry name" value="Thr_tRNA_synth"/>
    <property type="match status" value="1"/>
</dbReference>
<dbReference type="InterPro" id="IPR002314">
    <property type="entry name" value="aa-tRNA-synt_IIb"/>
</dbReference>
<dbReference type="InterPro" id="IPR006195">
    <property type="entry name" value="aa-tRNA-synth_II"/>
</dbReference>
<dbReference type="InterPro" id="IPR045864">
    <property type="entry name" value="aa-tRNA-synth_II/BPL/LPL"/>
</dbReference>
<dbReference type="InterPro" id="IPR004154">
    <property type="entry name" value="Anticodon-bd"/>
</dbReference>
<dbReference type="InterPro" id="IPR036621">
    <property type="entry name" value="Anticodon-bd_dom_sf"/>
</dbReference>
<dbReference type="InterPro" id="IPR012675">
    <property type="entry name" value="Beta-grasp_dom_sf"/>
</dbReference>
<dbReference type="InterPro" id="IPR004095">
    <property type="entry name" value="TGS"/>
</dbReference>
<dbReference type="InterPro" id="IPR012676">
    <property type="entry name" value="TGS-like"/>
</dbReference>
<dbReference type="InterPro" id="IPR002320">
    <property type="entry name" value="Thr-tRNA-ligase_IIa"/>
</dbReference>
<dbReference type="InterPro" id="IPR018163">
    <property type="entry name" value="Thr/Ala-tRNA-synth_IIc_edit"/>
</dbReference>
<dbReference type="InterPro" id="IPR047246">
    <property type="entry name" value="ThrRS_anticodon"/>
</dbReference>
<dbReference type="InterPro" id="IPR033728">
    <property type="entry name" value="ThrRS_core"/>
</dbReference>
<dbReference type="InterPro" id="IPR012947">
    <property type="entry name" value="tRNA_SAD"/>
</dbReference>
<dbReference type="NCBIfam" id="TIGR00418">
    <property type="entry name" value="thrS"/>
    <property type="match status" value="1"/>
</dbReference>
<dbReference type="PANTHER" id="PTHR11451:SF44">
    <property type="entry name" value="THREONINE--TRNA LIGASE, CHLOROPLASTIC_MITOCHONDRIAL 2"/>
    <property type="match status" value="1"/>
</dbReference>
<dbReference type="PANTHER" id="PTHR11451">
    <property type="entry name" value="THREONINE-TRNA LIGASE"/>
    <property type="match status" value="1"/>
</dbReference>
<dbReference type="Pfam" id="PF03129">
    <property type="entry name" value="HGTP_anticodon"/>
    <property type="match status" value="1"/>
</dbReference>
<dbReference type="Pfam" id="PF02824">
    <property type="entry name" value="TGS"/>
    <property type="match status" value="1"/>
</dbReference>
<dbReference type="Pfam" id="PF00587">
    <property type="entry name" value="tRNA-synt_2b"/>
    <property type="match status" value="1"/>
</dbReference>
<dbReference type="Pfam" id="PF07973">
    <property type="entry name" value="tRNA_SAD"/>
    <property type="match status" value="1"/>
</dbReference>
<dbReference type="PRINTS" id="PR01047">
    <property type="entry name" value="TRNASYNTHTHR"/>
</dbReference>
<dbReference type="SMART" id="SM00863">
    <property type="entry name" value="tRNA_SAD"/>
    <property type="match status" value="1"/>
</dbReference>
<dbReference type="SUPFAM" id="SSF52954">
    <property type="entry name" value="Class II aaRS ABD-related"/>
    <property type="match status" value="1"/>
</dbReference>
<dbReference type="SUPFAM" id="SSF55681">
    <property type="entry name" value="Class II aaRS and biotin synthetases"/>
    <property type="match status" value="1"/>
</dbReference>
<dbReference type="SUPFAM" id="SSF81271">
    <property type="entry name" value="TGS-like"/>
    <property type="match status" value="1"/>
</dbReference>
<dbReference type="SUPFAM" id="SSF55186">
    <property type="entry name" value="ThrRS/AlaRS common domain"/>
    <property type="match status" value="1"/>
</dbReference>
<dbReference type="PROSITE" id="PS50862">
    <property type="entry name" value="AA_TRNA_LIGASE_II"/>
    <property type="match status" value="1"/>
</dbReference>
<dbReference type="PROSITE" id="PS51880">
    <property type="entry name" value="TGS"/>
    <property type="match status" value="1"/>
</dbReference>
<comment type="function">
    <text evidence="1">Catalyzes the attachment of threonine to tRNA(Thr) in a two-step reaction: L-threonine is first activated by ATP to form Thr-AMP and then transferred to the acceptor end of tRNA(Thr). Also edits incorrectly charged L-seryl-tRNA(Thr).</text>
</comment>
<comment type="catalytic activity">
    <reaction evidence="1">
        <text>tRNA(Thr) + L-threonine + ATP = L-threonyl-tRNA(Thr) + AMP + diphosphate + H(+)</text>
        <dbReference type="Rhea" id="RHEA:24624"/>
        <dbReference type="Rhea" id="RHEA-COMP:9670"/>
        <dbReference type="Rhea" id="RHEA-COMP:9704"/>
        <dbReference type="ChEBI" id="CHEBI:15378"/>
        <dbReference type="ChEBI" id="CHEBI:30616"/>
        <dbReference type="ChEBI" id="CHEBI:33019"/>
        <dbReference type="ChEBI" id="CHEBI:57926"/>
        <dbReference type="ChEBI" id="CHEBI:78442"/>
        <dbReference type="ChEBI" id="CHEBI:78534"/>
        <dbReference type="ChEBI" id="CHEBI:456215"/>
        <dbReference type="EC" id="6.1.1.3"/>
    </reaction>
</comment>
<comment type="cofactor">
    <cofactor evidence="1">
        <name>Zn(2+)</name>
        <dbReference type="ChEBI" id="CHEBI:29105"/>
    </cofactor>
    <text evidence="1">Binds 1 zinc ion per subunit.</text>
</comment>
<comment type="subunit">
    <text evidence="1">Homodimer.</text>
</comment>
<comment type="subcellular location">
    <subcellularLocation>
        <location evidence="1">Cytoplasm</location>
    </subcellularLocation>
</comment>
<comment type="similarity">
    <text evidence="1">Belongs to the class-II aminoacyl-tRNA synthetase family.</text>
</comment>
<gene>
    <name evidence="1" type="primary">thrS</name>
    <name type="ordered locus">SO_2299</name>
</gene>
<evidence type="ECO:0000255" key="1">
    <source>
        <dbReference type="HAMAP-Rule" id="MF_00184"/>
    </source>
</evidence>
<evidence type="ECO:0000255" key="2">
    <source>
        <dbReference type="PROSITE-ProRule" id="PRU01228"/>
    </source>
</evidence>
<name>SYT_SHEON</name>